<dbReference type="EC" id="1.14.14.-" evidence="2"/>
<dbReference type="EMBL" id="X53477">
    <property type="protein sequence ID" value="CAA37570.1"/>
    <property type="molecule type" value="mRNA"/>
</dbReference>
<dbReference type="EMBL" id="M58041">
    <property type="protein sequence ID" value="AAA40950.1"/>
    <property type="molecule type" value="mRNA"/>
</dbReference>
<dbReference type="PIR" id="S11160">
    <property type="entry name" value="A39257"/>
</dbReference>
<dbReference type="RefSeq" id="NP_612521.1">
    <property type="nucleotide sequence ID" value="NM_138512.1"/>
</dbReference>
<dbReference type="SMR" id="P19225"/>
<dbReference type="FunCoup" id="P19225">
    <property type="interactions" value="99"/>
</dbReference>
<dbReference type="IntAct" id="P19225">
    <property type="interactions" value="4"/>
</dbReference>
<dbReference type="STRING" id="10116.ENSRNOP00000051607"/>
<dbReference type="GlyGen" id="P19225">
    <property type="glycosylation" value="1 site"/>
</dbReference>
<dbReference type="iPTMnet" id="P19225"/>
<dbReference type="PhosphoSitePlus" id="P19225"/>
<dbReference type="PaxDb" id="10116-ENSRNOP00000051607"/>
<dbReference type="Ensembl" id="ENSRNOT00000054724.3">
    <property type="protein sequence ID" value="ENSRNOP00000051607.2"/>
    <property type="gene ID" value="ENSRNOG00000021924.5"/>
</dbReference>
<dbReference type="GeneID" id="171518"/>
<dbReference type="KEGG" id="rno:171518"/>
<dbReference type="UCSC" id="RGD:620368">
    <property type="organism name" value="rat"/>
</dbReference>
<dbReference type="AGR" id="RGD:620368"/>
<dbReference type="CTD" id="171518"/>
<dbReference type="RGD" id="620368">
    <property type="gene designation" value="Cyp2c22"/>
</dbReference>
<dbReference type="eggNOG" id="KOG0156">
    <property type="taxonomic scope" value="Eukaryota"/>
</dbReference>
<dbReference type="GeneTree" id="ENSGT00940000162654"/>
<dbReference type="HOGENOM" id="CLU_001570_22_3_1"/>
<dbReference type="InParanoid" id="P19225"/>
<dbReference type="OMA" id="QHWLKFK"/>
<dbReference type="OrthoDB" id="1103324at2759"/>
<dbReference type="PhylomeDB" id="P19225"/>
<dbReference type="TreeFam" id="TF352043"/>
<dbReference type="PRO" id="PR:P19225"/>
<dbReference type="Proteomes" id="UP000002494">
    <property type="component" value="Chromosome 1"/>
</dbReference>
<dbReference type="Bgee" id="ENSRNOG00000021924">
    <property type="expression patterns" value="Expressed in liver and 14 other cell types or tissues"/>
</dbReference>
<dbReference type="ExpressionAtlas" id="P19225">
    <property type="expression patterns" value="baseline and differential"/>
</dbReference>
<dbReference type="GO" id="GO:0005737">
    <property type="term" value="C:cytoplasm"/>
    <property type="evidence" value="ECO:0000318"/>
    <property type="project" value="GO_Central"/>
</dbReference>
<dbReference type="GO" id="GO:0005789">
    <property type="term" value="C:endoplasmic reticulum membrane"/>
    <property type="evidence" value="ECO:0007669"/>
    <property type="project" value="UniProtKB-SubCell"/>
</dbReference>
<dbReference type="GO" id="GO:0043231">
    <property type="term" value="C:intracellular membrane-bounded organelle"/>
    <property type="evidence" value="ECO:0000318"/>
    <property type="project" value="GO_Central"/>
</dbReference>
<dbReference type="GO" id="GO:0020037">
    <property type="term" value="F:heme binding"/>
    <property type="evidence" value="ECO:0000318"/>
    <property type="project" value="GO_Central"/>
</dbReference>
<dbReference type="GO" id="GO:0005506">
    <property type="term" value="F:iron ion binding"/>
    <property type="evidence" value="ECO:0007669"/>
    <property type="project" value="InterPro"/>
</dbReference>
<dbReference type="GO" id="GO:0004497">
    <property type="term" value="F:monooxygenase activity"/>
    <property type="evidence" value="ECO:0000304"/>
    <property type="project" value="RGD"/>
</dbReference>
<dbReference type="GO" id="GO:0016712">
    <property type="term" value="F:oxidoreductase activity, acting on paired donors, with incorporation or reduction of molecular oxygen, reduced flavin or flavoprotein as one donor, and incorporation of one atom of oxygen"/>
    <property type="evidence" value="ECO:0000318"/>
    <property type="project" value="GO_Central"/>
</dbReference>
<dbReference type="GO" id="GO:0006082">
    <property type="term" value="P:organic acid metabolic process"/>
    <property type="evidence" value="ECO:0000318"/>
    <property type="project" value="GO_Central"/>
</dbReference>
<dbReference type="GO" id="GO:0006805">
    <property type="term" value="P:xenobiotic metabolic process"/>
    <property type="evidence" value="ECO:0000318"/>
    <property type="project" value="GO_Central"/>
</dbReference>
<dbReference type="CDD" id="cd20665">
    <property type="entry name" value="CYP2C-like"/>
    <property type="match status" value="1"/>
</dbReference>
<dbReference type="FunFam" id="1.10.630.10:FF:000001">
    <property type="entry name" value="Cytochrome P450, family 2"/>
    <property type="match status" value="1"/>
</dbReference>
<dbReference type="Gene3D" id="1.10.630.10">
    <property type="entry name" value="Cytochrome P450"/>
    <property type="match status" value="1"/>
</dbReference>
<dbReference type="InterPro" id="IPR001128">
    <property type="entry name" value="Cyt_P450"/>
</dbReference>
<dbReference type="InterPro" id="IPR017972">
    <property type="entry name" value="Cyt_P450_CS"/>
</dbReference>
<dbReference type="InterPro" id="IPR002401">
    <property type="entry name" value="Cyt_P450_E_grp-I"/>
</dbReference>
<dbReference type="InterPro" id="IPR008069">
    <property type="entry name" value="Cyt_P450_E_grp-I_CYP2D-like"/>
</dbReference>
<dbReference type="InterPro" id="IPR036396">
    <property type="entry name" value="Cyt_P450_sf"/>
</dbReference>
<dbReference type="InterPro" id="IPR050182">
    <property type="entry name" value="Cytochrome_P450_fam2"/>
</dbReference>
<dbReference type="PANTHER" id="PTHR24300:SF200">
    <property type="entry name" value="CYTOCHROME P450 2C70"/>
    <property type="match status" value="1"/>
</dbReference>
<dbReference type="PANTHER" id="PTHR24300">
    <property type="entry name" value="CYTOCHROME P450 508A4-RELATED"/>
    <property type="match status" value="1"/>
</dbReference>
<dbReference type="Pfam" id="PF00067">
    <property type="entry name" value="p450"/>
    <property type="match status" value="1"/>
</dbReference>
<dbReference type="PRINTS" id="PR00463">
    <property type="entry name" value="EP450I"/>
</dbReference>
<dbReference type="PRINTS" id="PR01686">
    <property type="entry name" value="EP450ICYP2D"/>
</dbReference>
<dbReference type="PRINTS" id="PR00385">
    <property type="entry name" value="P450"/>
</dbReference>
<dbReference type="SUPFAM" id="SSF48264">
    <property type="entry name" value="Cytochrome P450"/>
    <property type="match status" value="1"/>
</dbReference>
<dbReference type="PROSITE" id="PS00086">
    <property type="entry name" value="CYTOCHROME_P450"/>
    <property type="match status" value="1"/>
</dbReference>
<sequence>MALFIFLGIWLSCLVFLFLWNQHHVRRKLPPGPTPLPIFGNILQVGVKNISKSMCMLAKEYGPVFTMYLGMKPTVVLYGYEVLKEALIDRGEEFSDKMHSSMLSKVSQGLGIVFSNGEIWKQTRRFSLMVLRSMGMGKRTIENRIQEEVVYLLEALRKTNGSPCDPSFLLACVPCNVISSVIFQHRFDYSDEKFQKFIENFHTKIEILASPWAQLCSAYPVLYYLPGIHNKFLKDVTEQKKFILMEINRHRASLNLSNPQDFIDYFLIKMEKEKHNEKSEFTMDNLIVTIGDLFGAGTETTSSTIKYGLLLLLKYPEVTAKIQEEITRVIGRHRRPCMQDRNHMPYTDAVLHEIQRYIDFVPIPLPRKTTQDVEFRGYHIPKGTSVMACLTSALHDDKEFPNPEKFDPGHFLDEKGNFKKSDYFMAFSAGRRACIGEGLARMEMFLILTSILQHFTLKPLVNPEDIDTTPVQPGLLSVPPPFELCFIPV</sequence>
<keyword id="KW-0256">Endoplasmic reticulum</keyword>
<keyword id="KW-0349">Heme</keyword>
<keyword id="KW-0408">Iron</keyword>
<keyword id="KW-0472">Membrane</keyword>
<keyword id="KW-0479">Metal-binding</keyword>
<keyword id="KW-0492">Microsome</keyword>
<keyword id="KW-0503">Monooxygenase</keyword>
<keyword id="KW-0560">Oxidoreductase</keyword>
<keyword id="KW-1185">Reference proteome</keyword>
<keyword id="KW-0732">Signal</keyword>
<comment type="function">
    <text evidence="2">A cytochrome P450 monooxygenase involved in muricholic acid (MCA) synthesis. Hydroxylates at the 6-beta position two major bile acids, chenodeoxycholic acid (CDCA) and ursodeoxycholic acid (UDCA) to form alpha-MCA and beta-MCA, respectively. May regulate NR1H4/farnesoid X receptor signaling, as taurine-conjugated MCAs are antagonists of NR1H4. Mechanistically, uses molecular oxygen inserting one oxygen atom into a substrate, and reducing the second into a water molecule, with two electrons provided by NADPH via cytochrome P450 reductase (CPR; NADPH-ferrihemoprotein reductase).</text>
</comment>
<comment type="catalytic activity">
    <reaction evidence="2">
        <text>chenodeoxycholate + reduced [NADPH--hemoprotein reductase] + O2 = alpha-muricholate + oxidized [NADPH--hemoprotein reductase] + H2O + H(+)</text>
        <dbReference type="Rhea" id="RHEA:51448"/>
        <dbReference type="Rhea" id="RHEA-COMP:11964"/>
        <dbReference type="Rhea" id="RHEA-COMP:11965"/>
        <dbReference type="ChEBI" id="CHEBI:15377"/>
        <dbReference type="ChEBI" id="CHEBI:15378"/>
        <dbReference type="ChEBI" id="CHEBI:15379"/>
        <dbReference type="ChEBI" id="CHEBI:36234"/>
        <dbReference type="ChEBI" id="CHEBI:57618"/>
        <dbReference type="ChEBI" id="CHEBI:58210"/>
        <dbReference type="ChEBI" id="CHEBI:134116"/>
    </reaction>
    <physiologicalReaction direction="left-to-right" evidence="2">
        <dbReference type="Rhea" id="RHEA:51449"/>
    </physiologicalReaction>
</comment>
<comment type="catalytic activity">
    <reaction evidence="2">
        <text>ursodeoxycholate + reduced [NADPH--hemoprotein reductase] + O2 = beta-muricholate + oxidized [NADPH--hemoprotein reductase] + H2O + H(+)</text>
        <dbReference type="Rhea" id="RHEA:51452"/>
        <dbReference type="Rhea" id="RHEA-COMP:11964"/>
        <dbReference type="Rhea" id="RHEA-COMP:11965"/>
        <dbReference type="ChEBI" id="CHEBI:15377"/>
        <dbReference type="ChEBI" id="CHEBI:15378"/>
        <dbReference type="ChEBI" id="CHEBI:15379"/>
        <dbReference type="ChEBI" id="CHEBI:57618"/>
        <dbReference type="ChEBI" id="CHEBI:58210"/>
        <dbReference type="ChEBI" id="CHEBI:78604"/>
        <dbReference type="ChEBI" id="CHEBI:134119"/>
    </reaction>
    <physiologicalReaction direction="left-to-right" evidence="2">
        <dbReference type="Rhea" id="RHEA:51453"/>
    </physiologicalReaction>
</comment>
<comment type="cofactor">
    <cofactor evidence="1">
        <name>heme</name>
        <dbReference type="ChEBI" id="CHEBI:30413"/>
    </cofactor>
</comment>
<comment type="subcellular location">
    <subcellularLocation>
        <location>Endoplasmic reticulum membrane</location>
        <topology>Peripheral membrane protein</topology>
    </subcellularLocation>
    <subcellularLocation>
        <location>Microsome membrane</location>
        <topology>Peripheral membrane protein</topology>
    </subcellularLocation>
</comment>
<comment type="similarity">
    <text evidence="4">Belongs to the cytochrome P450 family.</text>
</comment>
<evidence type="ECO:0000250" key="1">
    <source>
        <dbReference type="UniProtKB" id="P33261"/>
    </source>
</evidence>
<evidence type="ECO:0000250" key="2">
    <source>
        <dbReference type="UniProtKB" id="Q91W64"/>
    </source>
</evidence>
<evidence type="ECO:0000255" key="3"/>
<evidence type="ECO:0000305" key="4"/>
<evidence type="ECO:0000312" key="5">
    <source>
        <dbReference type="RGD" id="620368"/>
    </source>
</evidence>
<gene>
    <name evidence="5" type="primary">Cyp2c70</name>
    <name type="synonym">Cyp2c-70</name>
    <name type="synonym">Cyp2c22</name>
    <name type="synonym">P450md</name>
</gene>
<proteinExistence type="evidence at transcript level"/>
<accession>P19225</accession>
<name>CP270_RAT</name>
<organism>
    <name type="scientific">Rattus norvegicus</name>
    <name type="common">Rat</name>
    <dbReference type="NCBI Taxonomy" id="10116"/>
    <lineage>
        <taxon>Eukaryota</taxon>
        <taxon>Metazoa</taxon>
        <taxon>Chordata</taxon>
        <taxon>Craniata</taxon>
        <taxon>Vertebrata</taxon>
        <taxon>Euteleostomi</taxon>
        <taxon>Mammalia</taxon>
        <taxon>Eutheria</taxon>
        <taxon>Euarchontoglires</taxon>
        <taxon>Glires</taxon>
        <taxon>Rodentia</taxon>
        <taxon>Myomorpha</taxon>
        <taxon>Muroidea</taxon>
        <taxon>Muridae</taxon>
        <taxon>Murinae</taxon>
        <taxon>Rattus</taxon>
    </lineage>
</organism>
<protein>
    <recommendedName>
        <fullName>Cytochrome P450 2C70</fullName>
        <ecNumber evidence="2">1.14.14.-</ecNumber>
    </recommendedName>
    <alternativeName>
        <fullName>CYPIIC70</fullName>
    </alternativeName>
    <alternativeName>
        <fullName>Cytochrome P-450Md</fullName>
    </alternativeName>
    <alternativeName>
        <fullName>Cytochrome P450 P49</fullName>
    </alternativeName>
</protein>
<reference key="1">
    <citation type="journal article" date="1990" name="Nucleic Acids Res.">
        <title>cDNA and deduced amino acid sequences of a male dominant P-450Md mRNA in rats.</title>
        <authorList>
            <person name="Nagata K."/>
            <person name="Sasamura H."/>
            <person name="Miyata M."/>
            <person name="Shimada M."/>
            <person name="Yamazoe Y."/>
            <person name="Kato R."/>
        </authorList>
    </citation>
    <scope>NUCLEOTIDE SEQUENCE [MRNA]</scope>
    <source>
        <strain>Sprague-Dawley</strain>
        <tissue>Liver</tissue>
    </source>
</reference>
<reference key="2">
    <citation type="journal article" date="1990" name="Proc. Natl. Acad. Sci. U.S.A.">
        <title>A different cytochrome P450 form is induced in primary cultures of rat hepatocytes.</title>
        <authorList>
            <person name="Emi Y."/>
            <person name="Chijiiwa C."/>
            <person name="Omura T."/>
        </authorList>
    </citation>
    <scope>NUCLEOTIDE SEQUENCE [MRNA]</scope>
    <source>
        <strain>Sprague-Dawley</strain>
        <tissue>Liver</tissue>
    </source>
</reference>
<feature type="signal peptide" evidence="3">
    <location>
        <begin position="1"/>
        <end position="27"/>
    </location>
</feature>
<feature type="chain" id="PRO_0000051727" description="Cytochrome P450 2C70" evidence="3">
    <location>
        <begin position="28"/>
        <end position="489"/>
    </location>
</feature>
<feature type="binding site" description="axial binding residue" evidence="1">
    <location>
        <position position="434"/>
    </location>
    <ligand>
        <name>heme</name>
        <dbReference type="ChEBI" id="CHEBI:30413"/>
    </ligand>
    <ligandPart>
        <name>Fe</name>
        <dbReference type="ChEBI" id="CHEBI:18248"/>
    </ligandPart>
</feature>
<feature type="sequence conflict" description="In Ref. 2; AAA40950." evidence="4" ref="2">
    <original>I</original>
    <variation>M</variation>
    <location>
        <position position="50"/>
    </location>
</feature>
<feature type="sequence conflict" description="In Ref. 2; AAA40950." evidence="4" ref="2">
    <original>V</original>
    <variation>L</variation>
    <location>
        <position position="177"/>
    </location>
</feature>
<feature type="sequence conflict" description="In Ref. 2; AAA40950." evidence="4" ref="2">
    <original>T</original>
    <variation>I</variation>
    <location>
        <position position="456"/>
    </location>
</feature>
<feature type="sequence conflict" description="In Ref. 2; AAA40950." evidence="4" ref="2">
    <original>V</original>
    <variation>L</variation>
    <location>
        <position position="478"/>
    </location>
</feature>
<feature type="sequence conflict" description="In Ref. 2; AAA40950." evidence="4" ref="2">
    <original>E</original>
    <variation>Q</variation>
    <location>
        <position position="483"/>
    </location>
</feature>